<proteinExistence type="inferred from homology"/>
<protein>
    <recommendedName>
        <fullName evidence="1">Potassium-transporting ATPase KdpC subunit</fullName>
    </recommendedName>
    <alternativeName>
        <fullName evidence="1">ATP phosphohydrolase [potassium-transporting] C chain</fullName>
    </alternativeName>
    <alternativeName>
        <fullName evidence="1">Potassium-binding and translocating subunit C</fullName>
    </alternativeName>
    <alternativeName>
        <fullName evidence="1">Potassium-translocating ATPase C chain</fullName>
    </alternativeName>
</protein>
<keyword id="KW-0067">ATP-binding</keyword>
<keyword id="KW-1003">Cell membrane</keyword>
<keyword id="KW-0406">Ion transport</keyword>
<keyword id="KW-0472">Membrane</keyword>
<keyword id="KW-0547">Nucleotide-binding</keyword>
<keyword id="KW-0630">Potassium</keyword>
<keyword id="KW-0633">Potassium transport</keyword>
<keyword id="KW-0812">Transmembrane</keyword>
<keyword id="KW-1133">Transmembrane helix</keyword>
<keyword id="KW-0813">Transport</keyword>
<name>KDPC_STAAE</name>
<evidence type="ECO:0000255" key="1">
    <source>
        <dbReference type="HAMAP-Rule" id="MF_00276"/>
    </source>
</evidence>
<feature type="chain" id="PRO_1000071928" description="Potassium-transporting ATPase KdpC subunit">
    <location>
        <begin position="1"/>
        <end position="186"/>
    </location>
</feature>
<feature type="transmembrane region" description="Helical" evidence="1">
    <location>
        <begin position="10"/>
        <end position="30"/>
    </location>
</feature>
<dbReference type="EMBL" id="AP009351">
    <property type="protein sequence ID" value="BAF68252.1"/>
    <property type="molecule type" value="Genomic_DNA"/>
</dbReference>
<dbReference type="RefSeq" id="WP_001092411.1">
    <property type="nucleotide sequence ID" value="NZ_JBBIAE010000008.1"/>
</dbReference>
<dbReference type="SMR" id="A6QIS0"/>
<dbReference type="KEGG" id="sae:NWMN_1980"/>
<dbReference type="HOGENOM" id="CLU_077094_2_0_9"/>
<dbReference type="Proteomes" id="UP000006386">
    <property type="component" value="Chromosome"/>
</dbReference>
<dbReference type="GO" id="GO:0005886">
    <property type="term" value="C:plasma membrane"/>
    <property type="evidence" value="ECO:0007669"/>
    <property type="project" value="UniProtKB-SubCell"/>
</dbReference>
<dbReference type="GO" id="GO:0005524">
    <property type="term" value="F:ATP binding"/>
    <property type="evidence" value="ECO:0007669"/>
    <property type="project" value="UniProtKB-UniRule"/>
</dbReference>
<dbReference type="GO" id="GO:0008556">
    <property type="term" value="F:P-type potassium transmembrane transporter activity"/>
    <property type="evidence" value="ECO:0007669"/>
    <property type="project" value="InterPro"/>
</dbReference>
<dbReference type="HAMAP" id="MF_00276">
    <property type="entry name" value="KdpC"/>
    <property type="match status" value="1"/>
</dbReference>
<dbReference type="InterPro" id="IPR003820">
    <property type="entry name" value="KdpC"/>
</dbReference>
<dbReference type="NCBIfam" id="TIGR00681">
    <property type="entry name" value="kdpC"/>
    <property type="match status" value="1"/>
</dbReference>
<dbReference type="NCBIfam" id="NF010602">
    <property type="entry name" value="PRK13998.1"/>
    <property type="match status" value="1"/>
</dbReference>
<dbReference type="PANTHER" id="PTHR30042">
    <property type="entry name" value="POTASSIUM-TRANSPORTING ATPASE C CHAIN"/>
    <property type="match status" value="1"/>
</dbReference>
<dbReference type="PANTHER" id="PTHR30042:SF2">
    <property type="entry name" value="POTASSIUM-TRANSPORTING ATPASE KDPC SUBUNIT"/>
    <property type="match status" value="1"/>
</dbReference>
<dbReference type="Pfam" id="PF02669">
    <property type="entry name" value="KdpC"/>
    <property type="match status" value="1"/>
</dbReference>
<dbReference type="PIRSF" id="PIRSF001296">
    <property type="entry name" value="K_ATPase_KdpC"/>
    <property type="match status" value="1"/>
</dbReference>
<sequence length="186" mass="20618">MNTIRNSICLTIITMVLCGFLFPLAITLIGQIFFYQQANGSLITYDNRIVGSKLIGQHWTETRYFHGRPSAVDYNMNPEKLYKNGVSSGGSNESNGNTELIARMKHHVKFGNSNVTIDAATSSGSGLDPHITVENALKQAPRIADARHVSTSRVADLIQHRKQRGVLTNDYVNVLELNIALDKMKD</sequence>
<gene>
    <name evidence="1" type="primary">kdpC</name>
    <name type="ordered locus">NWMN_1980</name>
</gene>
<organism>
    <name type="scientific">Staphylococcus aureus (strain Newman)</name>
    <dbReference type="NCBI Taxonomy" id="426430"/>
    <lineage>
        <taxon>Bacteria</taxon>
        <taxon>Bacillati</taxon>
        <taxon>Bacillota</taxon>
        <taxon>Bacilli</taxon>
        <taxon>Bacillales</taxon>
        <taxon>Staphylococcaceae</taxon>
        <taxon>Staphylococcus</taxon>
    </lineage>
</organism>
<reference key="1">
    <citation type="journal article" date="2008" name="J. Bacteriol.">
        <title>Genome sequence of Staphylococcus aureus strain Newman and comparative analysis of staphylococcal genomes: polymorphism and evolution of two major pathogenicity islands.</title>
        <authorList>
            <person name="Baba T."/>
            <person name="Bae T."/>
            <person name="Schneewind O."/>
            <person name="Takeuchi F."/>
            <person name="Hiramatsu K."/>
        </authorList>
    </citation>
    <scope>NUCLEOTIDE SEQUENCE [LARGE SCALE GENOMIC DNA]</scope>
    <source>
        <strain>Newman</strain>
    </source>
</reference>
<accession>A6QIS0</accession>
<comment type="function">
    <text evidence="1">Part of the high-affinity ATP-driven potassium transport (or Kdp) system, which catalyzes the hydrolysis of ATP coupled with the electrogenic transport of potassium into the cytoplasm. This subunit acts as a catalytic chaperone that increases the ATP-binding affinity of the ATP-hydrolyzing subunit KdpB by the formation of a transient KdpB/KdpC/ATP ternary complex.</text>
</comment>
<comment type="subunit">
    <text evidence="1">The system is composed of three essential subunits: KdpA, KdpB and KdpC.</text>
</comment>
<comment type="subcellular location">
    <subcellularLocation>
        <location evidence="1">Cell membrane</location>
        <topology evidence="1">Single-pass membrane protein</topology>
    </subcellularLocation>
</comment>
<comment type="similarity">
    <text evidence="1">Belongs to the KdpC family.</text>
</comment>